<keyword id="KW-0963">Cytoplasm</keyword>
<keyword id="KW-0704">Schiff base</keyword>
<keyword id="KW-0784">Thiamine biosynthesis</keyword>
<keyword id="KW-0808">Transferase</keyword>
<comment type="function">
    <text evidence="1">Catalyzes the rearrangement of 1-deoxy-D-xylulose 5-phosphate (DXP) to produce the thiazole phosphate moiety of thiamine. Sulfur is provided by the thiocarboxylate moiety of the carrier protein ThiS. In vitro, sulfur can be provided by H(2)S.</text>
</comment>
<comment type="catalytic activity">
    <reaction evidence="1">
        <text>[ThiS sulfur-carrier protein]-C-terminal-Gly-aminoethanethioate + 2-iminoacetate + 1-deoxy-D-xylulose 5-phosphate = [ThiS sulfur-carrier protein]-C-terminal Gly-Gly + 2-[(2R,5Z)-2-carboxy-4-methylthiazol-5(2H)-ylidene]ethyl phosphate + 2 H2O + H(+)</text>
        <dbReference type="Rhea" id="RHEA:26297"/>
        <dbReference type="Rhea" id="RHEA-COMP:12909"/>
        <dbReference type="Rhea" id="RHEA-COMP:19908"/>
        <dbReference type="ChEBI" id="CHEBI:15377"/>
        <dbReference type="ChEBI" id="CHEBI:15378"/>
        <dbReference type="ChEBI" id="CHEBI:57792"/>
        <dbReference type="ChEBI" id="CHEBI:62899"/>
        <dbReference type="ChEBI" id="CHEBI:77846"/>
        <dbReference type="ChEBI" id="CHEBI:90778"/>
        <dbReference type="ChEBI" id="CHEBI:232372"/>
        <dbReference type="EC" id="2.8.1.10"/>
    </reaction>
</comment>
<comment type="pathway">
    <text evidence="1">Cofactor biosynthesis; thiamine diphosphate biosynthesis.</text>
</comment>
<comment type="subunit">
    <text evidence="1">Homotetramer. Forms heterodimers with either ThiH or ThiS.</text>
</comment>
<comment type="subcellular location">
    <subcellularLocation>
        <location evidence="1">Cytoplasm</location>
    </subcellularLocation>
</comment>
<comment type="similarity">
    <text evidence="1">Belongs to the ThiG family.</text>
</comment>
<sequence>MLHIADKTFASHLFTGTGKFASSQLMVEAIRACGSQLVTLAMKRVDLRQHNDAILEPLIAAGVTLLPNTSGAKTAEEAIFAAHLAREALGTNWLKLEIHPDARWLLPDPIETLKAAETLVQQGFIVLPYCGADPVLCKRLEEVGCAAVMPLGAPIGSNQGLETRAMLEIIIQQATVPVVVDAGIGVPSHAAQALEMGADAVLVNTAIAVADDPVNMAKAFRLAVEAGLLARQSGPGSRSHFAHATSPLTGFLEASA</sequence>
<gene>
    <name evidence="1" type="primary">thiG</name>
    <name type="ordered locus">ECED1_4697</name>
</gene>
<reference key="1">
    <citation type="journal article" date="2009" name="PLoS Genet.">
        <title>Organised genome dynamics in the Escherichia coli species results in highly diverse adaptive paths.</title>
        <authorList>
            <person name="Touchon M."/>
            <person name="Hoede C."/>
            <person name="Tenaillon O."/>
            <person name="Barbe V."/>
            <person name="Baeriswyl S."/>
            <person name="Bidet P."/>
            <person name="Bingen E."/>
            <person name="Bonacorsi S."/>
            <person name="Bouchier C."/>
            <person name="Bouvet O."/>
            <person name="Calteau A."/>
            <person name="Chiapello H."/>
            <person name="Clermont O."/>
            <person name="Cruveiller S."/>
            <person name="Danchin A."/>
            <person name="Diard M."/>
            <person name="Dossat C."/>
            <person name="Karoui M.E."/>
            <person name="Frapy E."/>
            <person name="Garry L."/>
            <person name="Ghigo J.M."/>
            <person name="Gilles A.M."/>
            <person name="Johnson J."/>
            <person name="Le Bouguenec C."/>
            <person name="Lescat M."/>
            <person name="Mangenot S."/>
            <person name="Martinez-Jehanne V."/>
            <person name="Matic I."/>
            <person name="Nassif X."/>
            <person name="Oztas S."/>
            <person name="Petit M.A."/>
            <person name="Pichon C."/>
            <person name="Rouy Z."/>
            <person name="Ruf C.S."/>
            <person name="Schneider D."/>
            <person name="Tourret J."/>
            <person name="Vacherie B."/>
            <person name="Vallenet D."/>
            <person name="Medigue C."/>
            <person name="Rocha E.P.C."/>
            <person name="Denamur E."/>
        </authorList>
    </citation>
    <scope>NUCLEOTIDE SEQUENCE [LARGE SCALE GENOMIC DNA]</scope>
    <source>
        <strain>ED1a</strain>
    </source>
</reference>
<protein>
    <recommendedName>
        <fullName evidence="1">Thiazole synthase</fullName>
        <ecNumber evidence="1">2.8.1.10</ecNumber>
    </recommendedName>
</protein>
<dbReference type="EC" id="2.8.1.10" evidence="1"/>
<dbReference type="EMBL" id="CU928162">
    <property type="protein sequence ID" value="CAR10661.1"/>
    <property type="molecule type" value="Genomic_DNA"/>
</dbReference>
<dbReference type="RefSeq" id="WP_000902344.1">
    <property type="nucleotide sequence ID" value="NC_011745.1"/>
</dbReference>
<dbReference type="SMR" id="B7N2J2"/>
<dbReference type="KEGG" id="ecq:ECED1_4697"/>
<dbReference type="HOGENOM" id="CLU_062233_1_0_6"/>
<dbReference type="UniPathway" id="UPA00060"/>
<dbReference type="Proteomes" id="UP000000748">
    <property type="component" value="Chromosome"/>
</dbReference>
<dbReference type="GO" id="GO:0005737">
    <property type="term" value="C:cytoplasm"/>
    <property type="evidence" value="ECO:0007669"/>
    <property type="project" value="UniProtKB-SubCell"/>
</dbReference>
<dbReference type="GO" id="GO:1990107">
    <property type="term" value="F:thiazole synthase activity"/>
    <property type="evidence" value="ECO:0007669"/>
    <property type="project" value="UniProtKB-EC"/>
</dbReference>
<dbReference type="GO" id="GO:0009229">
    <property type="term" value="P:thiamine diphosphate biosynthetic process"/>
    <property type="evidence" value="ECO:0007669"/>
    <property type="project" value="UniProtKB-UniRule"/>
</dbReference>
<dbReference type="CDD" id="cd04728">
    <property type="entry name" value="ThiG"/>
    <property type="match status" value="1"/>
</dbReference>
<dbReference type="FunFam" id="3.20.20.70:FF:000049">
    <property type="entry name" value="Thiazole synthase"/>
    <property type="match status" value="1"/>
</dbReference>
<dbReference type="Gene3D" id="3.20.20.70">
    <property type="entry name" value="Aldolase class I"/>
    <property type="match status" value="1"/>
</dbReference>
<dbReference type="HAMAP" id="MF_00443">
    <property type="entry name" value="ThiG"/>
    <property type="match status" value="1"/>
</dbReference>
<dbReference type="InterPro" id="IPR013785">
    <property type="entry name" value="Aldolase_TIM"/>
</dbReference>
<dbReference type="InterPro" id="IPR033983">
    <property type="entry name" value="Thiazole_synthase_ThiG"/>
</dbReference>
<dbReference type="InterPro" id="IPR008867">
    <property type="entry name" value="ThiG"/>
</dbReference>
<dbReference type="PANTHER" id="PTHR34266">
    <property type="entry name" value="THIAZOLE SYNTHASE"/>
    <property type="match status" value="1"/>
</dbReference>
<dbReference type="PANTHER" id="PTHR34266:SF2">
    <property type="entry name" value="THIAZOLE SYNTHASE"/>
    <property type="match status" value="1"/>
</dbReference>
<dbReference type="Pfam" id="PF05690">
    <property type="entry name" value="ThiG"/>
    <property type="match status" value="1"/>
</dbReference>
<dbReference type="SUPFAM" id="SSF110399">
    <property type="entry name" value="ThiG-like"/>
    <property type="match status" value="1"/>
</dbReference>
<feature type="chain" id="PRO_1000196862" description="Thiazole synthase">
    <location>
        <begin position="1"/>
        <end position="256"/>
    </location>
</feature>
<feature type="active site" description="Schiff-base intermediate with DXP" evidence="1">
    <location>
        <position position="95"/>
    </location>
</feature>
<feature type="binding site" evidence="1">
    <location>
        <position position="156"/>
    </location>
    <ligand>
        <name>1-deoxy-D-xylulose 5-phosphate</name>
        <dbReference type="ChEBI" id="CHEBI:57792"/>
    </ligand>
</feature>
<feature type="binding site" evidence="1">
    <location>
        <begin position="182"/>
        <end position="183"/>
    </location>
    <ligand>
        <name>1-deoxy-D-xylulose 5-phosphate</name>
        <dbReference type="ChEBI" id="CHEBI:57792"/>
    </ligand>
</feature>
<feature type="binding site" evidence="1">
    <location>
        <begin position="204"/>
        <end position="205"/>
    </location>
    <ligand>
        <name>1-deoxy-D-xylulose 5-phosphate</name>
        <dbReference type="ChEBI" id="CHEBI:57792"/>
    </ligand>
</feature>
<name>THIG_ECO81</name>
<evidence type="ECO:0000255" key="1">
    <source>
        <dbReference type="HAMAP-Rule" id="MF_00443"/>
    </source>
</evidence>
<proteinExistence type="inferred from homology"/>
<organism>
    <name type="scientific">Escherichia coli O81 (strain ED1a)</name>
    <dbReference type="NCBI Taxonomy" id="585397"/>
    <lineage>
        <taxon>Bacteria</taxon>
        <taxon>Pseudomonadati</taxon>
        <taxon>Pseudomonadota</taxon>
        <taxon>Gammaproteobacteria</taxon>
        <taxon>Enterobacterales</taxon>
        <taxon>Enterobacteriaceae</taxon>
        <taxon>Escherichia</taxon>
    </lineage>
</organism>
<accession>B7N2J2</accession>